<sequence length="215" mass="25612">MEEGKNWIVPTWRVPGRRMERWHSLVKYLKYRTRDLEEVRYVPHHKVGWAWWTCSRVIFPLKGESHLEIQAYWNLTPEKGWLSSHSVRITWYTERFWTDVTPDYADILIHSTYFSCFTAGEVRRAIRGEKLLSCCNYPQAHKVQVPSLQYLALVVVQQNDRPQRKGTARKQWRRDHWRGLRVARQDYRSLKQRGSEPSAPRAHFPGVAKVLEILA</sequence>
<dbReference type="EMBL" id="M30895">
    <property type="protein sequence ID" value="AAA43934.1"/>
    <property type="molecule type" value="Genomic_DNA"/>
</dbReference>
<dbReference type="PIR" id="JS0329">
    <property type="entry name" value="ASLJGG"/>
</dbReference>
<dbReference type="SMR" id="P18043"/>
<dbReference type="Proteomes" id="UP000007424">
    <property type="component" value="Segment"/>
</dbReference>
<dbReference type="GO" id="GO:0030430">
    <property type="term" value="C:host cell cytoplasm"/>
    <property type="evidence" value="ECO:0007669"/>
    <property type="project" value="UniProtKB-SubCell"/>
</dbReference>
<dbReference type="GO" id="GO:0020002">
    <property type="term" value="C:host cell plasma membrane"/>
    <property type="evidence" value="ECO:0007669"/>
    <property type="project" value="UniProtKB-SubCell"/>
</dbReference>
<dbReference type="GO" id="GO:0016020">
    <property type="term" value="C:membrane"/>
    <property type="evidence" value="ECO:0007669"/>
    <property type="project" value="UniProtKB-KW"/>
</dbReference>
<dbReference type="GO" id="GO:0044423">
    <property type="term" value="C:virion component"/>
    <property type="evidence" value="ECO:0007669"/>
    <property type="project" value="UniProtKB-KW"/>
</dbReference>
<dbReference type="GO" id="GO:0019058">
    <property type="term" value="P:viral life cycle"/>
    <property type="evidence" value="ECO:0007669"/>
    <property type="project" value="InterPro"/>
</dbReference>
<dbReference type="InterPro" id="IPR000475">
    <property type="entry name" value="Vif"/>
</dbReference>
<dbReference type="Pfam" id="PF00559">
    <property type="entry name" value="Vif"/>
    <property type="match status" value="1"/>
</dbReference>
<dbReference type="PRINTS" id="PR00349">
    <property type="entry name" value="VIRIONINFFCT"/>
</dbReference>
<comment type="function">
    <text evidence="1">Counteracts the innate antiviral activity of APOBEC3G. Forms a complex with host APOBEC3G thus preventing the entry of this lethally hypermutating enzyme into progeny virions. Functions as an adapter molecule, recruiting APOBEC3G to the ubiquitin-proteasome machinery. Targets APOBEC3G for degradation through the assembly with elongin BC complex, CUL5 and RBX1. Binds viral RNA and affects the stability of viral nucleoprotein core. May play a role in viral morphology (By similarity).</text>
</comment>
<comment type="subunit">
    <text evidence="1">Homomultimer; in vitro and presumably in vivo. Interacts with viral Pr55Gag precursor and human APOBEC3G. The interaction between Vif and APOBEC3G is species-specific, which may play a role in restricting the replication of HIV to humans. Forms an E3 ligase complex by interacting with human CUL5 and elongin BC complex (ELOB and ELOC) (By similarity).</text>
</comment>
<comment type="subcellular location">
    <subcellularLocation>
        <location evidence="1">Host cytoplasm</location>
    </subcellularLocation>
    <subcellularLocation>
        <location evidence="1">Host cell membrane</location>
        <topology evidence="1">Peripheral membrane protein</topology>
        <orientation evidence="1">Cytoplasmic side</orientation>
    </subcellularLocation>
    <subcellularLocation>
        <location evidence="1">Virion</location>
    </subcellularLocation>
    <text evidence="1">In the cytoplasm, seems to colocalize with intermediate filament vimentin. A fraction is associated with the cytoplasmic side of cellular membranes, presumably via the interaction with Pr55Gag precursor (By similarity).</text>
</comment>
<comment type="induction">
    <text>Expressed late during infection in a Rev-dependent manner.</text>
</comment>
<comment type="domain">
    <text evidence="1">The BC-like-box motif mediates the interaction with elongin BC complex.</text>
</comment>
<comment type="domain">
    <text evidence="1">The HCCH motif (H-x(5)-C-x(18)-C-x(5)-H) mediates the interaction with CUL5.</text>
</comment>
<comment type="PTM">
    <text evidence="1">Processed in virion by the viral protease.</text>
</comment>
<comment type="PTM">
    <text evidence="1">Highly phosphorylated on serine and threonine residues.</text>
</comment>
<comment type="PTM">
    <text evidence="1">Polyubiquitinated and degraded by the proteasome in the presence of APOBEC3G.</text>
</comment>
<comment type="miscellaneous">
    <text>Required for replication in 'nonpermissive' cells, including primary T-cells, macrophages and certain T-cell lines, but is dispensable for replication in 'permissive' cell lines, such as 293T cells. In nonpermissive cells, Vif-defective viruses can produce virions, but they fail to complete reverse transcription and cannot successfully infect new cells.</text>
</comment>
<comment type="miscellaneous">
    <text>Vif-defective viruses show catastrophic failure in reverse transcription due to APOBEC-induced mutations that initiate a DNA base repair pathway and compromise the structural integrity of the ssDNA. In the absence of Vif, the virion is morphologically abnormal.</text>
</comment>
<comment type="similarity">
    <text evidence="2">Belongs to the primate lentivirus group Vif protein family.</text>
</comment>
<name>VIF_HV2G1</name>
<protein>
    <recommendedName>
        <fullName>Virion infectivity factor</fullName>
        <shortName>Vif</shortName>
    </recommendedName>
    <alternativeName>
        <fullName>Q protein</fullName>
    </alternativeName>
    <alternativeName>
        <fullName>SOR protein</fullName>
    </alternativeName>
</protein>
<gene>
    <name type="primary">vif</name>
</gene>
<organism>
    <name type="scientific">Human immunodeficiency virus type 2 subtype A (isolate Ghana-1)</name>
    <name type="common">HIV-2</name>
    <dbReference type="NCBI Taxonomy" id="11717"/>
    <lineage>
        <taxon>Viruses</taxon>
        <taxon>Riboviria</taxon>
        <taxon>Pararnavirae</taxon>
        <taxon>Artverviricota</taxon>
        <taxon>Revtraviricetes</taxon>
        <taxon>Ortervirales</taxon>
        <taxon>Retroviridae</taxon>
        <taxon>Orthoretrovirinae</taxon>
        <taxon>Lentivirus</taxon>
        <taxon>Human immunodeficiency virus 2</taxon>
    </lineage>
</organism>
<proteinExistence type="evidence at transcript level"/>
<organismHost>
    <name type="scientific">Homo sapiens</name>
    <name type="common">Human</name>
    <dbReference type="NCBI Taxonomy" id="9606"/>
</organismHost>
<evidence type="ECO:0000250" key="1"/>
<evidence type="ECO:0000305" key="2"/>
<accession>P18043</accession>
<feature type="chain" id="PRO_0000085320" description="Virion infectivity factor">
    <location>
        <begin position="1"/>
        <end position="215"/>
    </location>
</feature>
<feature type="region of interest" description="Multimerization" evidence="1">
    <location>
        <begin position="154"/>
        <end position="167"/>
    </location>
</feature>
<feature type="short sequence motif" description="HCCH motif" evidence="1">
    <location>
        <begin position="110"/>
        <end position="141"/>
    </location>
</feature>
<feature type="short sequence motif" description="BC-box-like motif" evidence="1">
    <location>
        <begin position="147"/>
        <end position="156"/>
    </location>
</feature>
<feature type="modified residue" description="Phosphothreonine; by host MAP4K1" evidence="1">
    <location>
        <position position="98"/>
    </location>
</feature>
<feature type="modified residue" description="Phosphoserine; by host" evidence="1">
    <location>
        <position position="147"/>
    </location>
</feature>
<reference key="1">
    <citation type="journal article" date="1989" name="AIDS Res. Hum. Retroviruses">
        <title>Genomic divergence of HIV-2 from Ghana.</title>
        <authorList>
            <person name="Hasegawa A."/>
            <person name="Tsujimoto H."/>
            <person name="Maki N."/>
            <person name="Ishikawa K."/>
            <person name="Miura T."/>
            <person name="Fukasawa M."/>
            <person name="Miki K."/>
            <person name="Hayami M."/>
        </authorList>
    </citation>
    <scope>NUCLEOTIDE SEQUENCE [GENOMIC DNA]</scope>
</reference>
<keyword id="KW-0014">AIDS</keyword>
<keyword id="KW-1032">Host cell membrane</keyword>
<keyword id="KW-1035">Host cytoplasm</keyword>
<keyword id="KW-1043">Host membrane</keyword>
<keyword id="KW-0945">Host-virus interaction</keyword>
<keyword id="KW-0472">Membrane</keyword>
<keyword id="KW-0597">Phosphoprotein</keyword>
<keyword id="KW-0832">Ubl conjugation</keyword>
<keyword id="KW-0833">Ubl conjugation pathway</keyword>
<keyword id="KW-0946">Virion</keyword>